<name>RPOZ_THEYD</name>
<comment type="function">
    <text evidence="1">Promotes RNA polymerase assembly. Latches the N- and C-terminal regions of the beta' subunit thereby facilitating its interaction with the beta and alpha subunits.</text>
</comment>
<comment type="catalytic activity">
    <reaction evidence="1">
        <text>RNA(n) + a ribonucleoside 5'-triphosphate = RNA(n+1) + diphosphate</text>
        <dbReference type="Rhea" id="RHEA:21248"/>
        <dbReference type="Rhea" id="RHEA-COMP:14527"/>
        <dbReference type="Rhea" id="RHEA-COMP:17342"/>
        <dbReference type="ChEBI" id="CHEBI:33019"/>
        <dbReference type="ChEBI" id="CHEBI:61557"/>
        <dbReference type="ChEBI" id="CHEBI:140395"/>
        <dbReference type="EC" id="2.7.7.6"/>
    </reaction>
</comment>
<comment type="subunit">
    <text evidence="1">The RNAP catalytic core consists of 2 alpha, 1 beta, 1 beta' and 1 omega subunit. When a sigma factor is associated with the core the holoenzyme is formed, which can initiate transcription.</text>
</comment>
<comment type="similarity">
    <text evidence="1">Belongs to the RNA polymerase subunit omega family.</text>
</comment>
<protein>
    <recommendedName>
        <fullName evidence="1">DNA-directed RNA polymerase subunit omega</fullName>
        <shortName evidence="1">RNAP omega subunit</shortName>
        <ecNumber evidence="1">2.7.7.6</ecNumber>
    </recommendedName>
    <alternativeName>
        <fullName evidence="1">RNA polymerase omega subunit</fullName>
    </alternativeName>
    <alternativeName>
        <fullName evidence="1">Transcriptase subunit omega</fullName>
    </alternativeName>
</protein>
<organism>
    <name type="scientific">Thermodesulfovibrio yellowstonii (strain ATCC 51303 / DSM 11347 / YP87)</name>
    <dbReference type="NCBI Taxonomy" id="289376"/>
    <lineage>
        <taxon>Bacteria</taxon>
        <taxon>Pseudomonadati</taxon>
        <taxon>Nitrospirota</taxon>
        <taxon>Thermodesulfovibrionia</taxon>
        <taxon>Thermodesulfovibrionales</taxon>
        <taxon>Thermodesulfovibrionaceae</taxon>
        <taxon>Thermodesulfovibrio</taxon>
    </lineage>
</organism>
<proteinExistence type="inferred from homology"/>
<keyword id="KW-0240">DNA-directed RNA polymerase</keyword>
<keyword id="KW-0548">Nucleotidyltransferase</keyword>
<keyword id="KW-1185">Reference proteome</keyword>
<keyword id="KW-0804">Transcription</keyword>
<keyword id="KW-0808">Transferase</keyword>
<dbReference type="EC" id="2.7.7.6" evidence="1"/>
<dbReference type="EMBL" id="CP001147">
    <property type="protein sequence ID" value="ACI20946.1"/>
    <property type="molecule type" value="Genomic_DNA"/>
</dbReference>
<dbReference type="RefSeq" id="WP_012545675.1">
    <property type="nucleotide sequence ID" value="NC_011296.1"/>
</dbReference>
<dbReference type="RefSeq" id="YP_002248250.1">
    <property type="nucleotide sequence ID" value="NC_011296.1"/>
</dbReference>
<dbReference type="SMR" id="B5YJ35"/>
<dbReference type="STRING" id="289376.THEYE_A0403"/>
<dbReference type="EnsemblBacteria" id="ACI20946">
    <property type="protein sequence ID" value="ACI20946"/>
    <property type="gene ID" value="THEYE_A0403"/>
</dbReference>
<dbReference type="KEGG" id="tye:THEYE_A0403"/>
<dbReference type="PATRIC" id="fig|289376.4.peg.398"/>
<dbReference type="eggNOG" id="COG1758">
    <property type="taxonomic scope" value="Bacteria"/>
</dbReference>
<dbReference type="HOGENOM" id="CLU_1854302_0_0_0"/>
<dbReference type="InParanoid" id="B5YJ35"/>
<dbReference type="OrthoDB" id="9794757at2"/>
<dbReference type="Proteomes" id="UP000000718">
    <property type="component" value="Chromosome"/>
</dbReference>
<dbReference type="GO" id="GO:0000428">
    <property type="term" value="C:DNA-directed RNA polymerase complex"/>
    <property type="evidence" value="ECO:0007669"/>
    <property type="project" value="UniProtKB-KW"/>
</dbReference>
<dbReference type="GO" id="GO:0003677">
    <property type="term" value="F:DNA binding"/>
    <property type="evidence" value="ECO:0007669"/>
    <property type="project" value="UniProtKB-UniRule"/>
</dbReference>
<dbReference type="GO" id="GO:0003899">
    <property type="term" value="F:DNA-directed RNA polymerase activity"/>
    <property type="evidence" value="ECO:0007669"/>
    <property type="project" value="UniProtKB-UniRule"/>
</dbReference>
<dbReference type="GO" id="GO:0006351">
    <property type="term" value="P:DNA-templated transcription"/>
    <property type="evidence" value="ECO:0007669"/>
    <property type="project" value="UniProtKB-UniRule"/>
</dbReference>
<dbReference type="Gene3D" id="3.90.940.10">
    <property type="match status" value="1"/>
</dbReference>
<dbReference type="HAMAP" id="MF_00366">
    <property type="entry name" value="RNApol_bact_RpoZ"/>
    <property type="match status" value="1"/>
</dbReference>
<dbReference type="InterPro" id="IPR003716">
    <property type="entry name" value="DNA-dir_RNA_pol_omega"/>
</dbReference>
<dbReference type="InterPro" id="IPR006110">
    <property type="entry name" value="Pol_omega/Rpo6/RPB6"/>
</dbReference>
<dbReference type="InterPro" id="IPR036161">
    <property type="entry name" value="RPB6/omega-like_sf"/>
</dbReference>
<dbReference type="NCBIfam" id="TIGR00690">
    <property type="entry name" value="rpoZ"/>
    <property type="match status" value="1"/>
</dbReference>
<dbReference type="Pfam" id="PF01192">
    <property type="entry name" value="RNA_pol_Rpb6"/>
    <property type="match status" value="1"/>
</dbReference>
<dbReference type="SMART" id="SM01409">
    <property type="entry name" value="RNA_pol_Rpb6"/>
    <property type="match status" value="1"/>
</dbReference>
<dbReference type="SUPFAM" id="SSF63562">
    <property type="entry name" value="RPB6/omega subunit-like"/>
    <property type="match status" value="1"/>
</dbReference>
<gene>
    <name evidence="1" type="primary">rpoZ</name>
    <name type="ordered locus">THEYE_A0403</name>
</gene>
<reference key="1">
    <citation type="submission" date="2008-08" db="EMBL/GenBank/DDBJ databases">
        <title>The complete genome sequence of Thermodesulfovibrio yellowstonii strain ATCC 51303 / DSM 11347 / YP87.</title>
        <authorList>
            <person name="Dodson R.J."/>
            <person name="Durkin A.S."/>
            <person name="Wu M."/>
            <person name="Eisen J."/>
            <person name="Sutton G."/>
        </authorList>
    </citation>
    <scope>NUCLEOTIDE SEQUENCE [LARGE SCALE GENOMIC DNA]</scope>
    <source>
        <strain>ATCC 51303 / DSM 11347 / YP87</strain>
    </source>
</reference>
<sequence length="138" mass="15559">MKKKEQSLDIISLPIELDRTKIESRYRLALIAAQRAAELSLGATAKIDKKGKKVTTTALLEILSNKIDYITGEEAVKAKEKIDQIDVKKLLEDKRKAIPDLSELEKDLKVYLHGKESAEKMLEDLFTEGESNSSNEQE</sequence>
<accession>B5YJ35</accession>
<evidence type="ECO:0000255" key="1">
    <source>
        <dbReference type="HAMAP-Rule" id="MF_00366"/>
    </source>
</evidence>
<feature type="chain" id="PRO_1000121287" description="DNA-directed RNA polymerase subunit omega">
    <location>
        <begin position="1"/>
        <end position="138"/>
    </location>
</feature>